<name>SYH_MYCM1</name>
<accession>Q6KI17</accession>
<protein>
    <recommendedName>
        <fullName evidence="1">Histidine--tRNA ligase</fullName>
        <ecNumber evidence="1">6.1.1.21</ecNumber>
    </recommendedName>
    <alternativeName>
        <fullName evidence="1">Histidyl-tRNA synthetase</fullName>
        <shortName evidence="1">HisRS</shortName>
    </alternativeName>
</protein>
<sequence>MMWYNLTIKQLKNVRNFMIQKPKGTSDFFLEKADLFQYILDTFRKEAELFNYSYIQTPILEFYDLFYRSVGETTDVVSKEMFIFNDRSERKMALRPEKTAGVIRSLVENKLIFNAENKFYYYGSMFRYERPQKGRYREFTQIGCEWIEDNSDFSDFEILLFASKFLGNFNFNKVILKINNLGNKVERENYLIELKKYFYKFKDKFDEISLKRLEKNPLRILDDKEINHQDFIKNAPKLFDFLNSETVQKFNNLQNYLRKSNISFEIDYSLVRGFDYYNNLVFEFVYYDEESRSELTILGGGRYSNLIEELGGPKKDAIGFAAGVERLMILLKEKEWEKPIKTSIFVFNKDHEDLYKNFDFVYKLRKRDLVVKQNVSNFKLQKIYSKIVNEGIKFLIFFDEKLNQIIIKNLINKNFLDLTNKSQEEKINLVKKFIESENKNENNSK</sequence>
<proteinExistence type="inferred from homology"/>
<evidence type="ECO:0000255" key="1">
    <source>
        <dbReference type="HAMAP-Rule" id="MF_00127"/>
    </source>
</evidence>
<reference key="1">
    <citation type="journal article" date="2004" name="Genome Res.">
        <title>The complete genome and proteome of Mycoplasma mobile.</title>
        <authorList>
            <person name="Jaffe J.D."/>
            <person name="Stange-Thomann N."/>
            <person name="Smith C."/>
            <person name="DeCaprio D."/>
            <person name="Fisher S."/>
            <person name="Butler J."/>
            <person name="Calvo S."/>
            <person name="Elkins T."/>
            <person name="FitzGerald M.G."/>
            <person name="Hafez N."/>
            <person name="Kodira C.D."/>
            <person name="Major J."/>
            <person name="Wang S."/>
            <person name="Wilkinson J."/>
            <person name="Nicol R."/>
            <person name="Nusbaum C."/>
            <person name="Birren B."/>
            <person name="Berg H.C."/>
            <person name="Church G.M."/>
        </authorList>
    </citation>
    <scope>NUCLEOTIDE SEQUENCE [LARGE SCALE GENOMIC DNA]</scope>
    <source>
        <strain>ATCC 43663 / NCTC 11711 / 163 K</strain>
    </source>
</reference>
<feature type="chain" id="PRO_0000136202" description="Histidine--tRNA ligase">
    <location>
        <begin position="1"/>
        <end position="445"/>
    </location>
</feature>
<comment type="catalytic activity">
    <reaction evidence="1">
        <text>tRNA(His) + L-histidine + ATP = L-histidyl-tRNA(His) + AMP + diphosphate + H(+)</text>
        <dbReference type="Rhea" id="RHEA:17313"/>
        <dbReference type="Rhea" id="RHEA-COMP:9665"/>
        <dbReference type="Rhea" id="RHEA-COMP:9689"/>
        <dbReference type="ChEBI" id="CHEBI:15378"/>
        <dbReference type="ChEBI" id="CHEBI:30616"/>
        <dbReference type="ChEBI" id="CHEBI:33019"/>
        <dbReference type="ChEBI" id="CHEBI:57595"/>
        <dbReference type="ChEBI" id="CHEBI:78442"/>
        <dbReference type="ChEBI" id="CHEBI:78527"/>
        <dbReference type="ChEBI" id="CHEBI:456215"/>
        <dbReference type="EC" id="6.1.1.21"/>
    </reaction>
</comment>
<comment type="subunit">
    <text evidence="1">Homodimer.</text>
</comment>
<comment type="subcellular location">
    <subcellularLocation>
        <location evidence="1">Cytoplasm</location>
    </subcellularLocation>
</comment>
<comment type="similarity">
    <text evidence="1">Belongs to the class-II aminoacyl-tRNA synthetase family.</text>
</comment>
<gene>
    <name evidence="1" type="primary">hisS</name>
    <name type="ordered locus">MMOB2730</name>
</gene>
<keyword id="KW-0030">Aminoacyl-tRNA synthetase</keyword>
<keyword id="KW-0067">ATP-binding</keyword>
<keyword id="KW-0963">Cytoplasm</keyword>
<keyword id="KW-0436">Ligase</keyword>
<keyword id="KW-0547">Nucleotide-binding</keyword>
<keyword id="KW-0648">Protein biosynthesis</keyword>
<keyword id="KW-1185">Reference proteome</keyword>
<organism>
    <name type="scientific">Mycoplasma mobile (strain ATCC 43663 / 163K / NCTC 11711)</name>
    <name type="common">Mesomycoplasma mobile</name>
    <dbReference type="NCBI Taxonomy" id="267748"/>
    <lineage>
        <taxon>Bacteria</taxon>
        <taxon>Bacillati</taxon>
        <taxon>Mycoplasmatota</taxon>
        <taxon>Mycoplasmoidales</taxon>
        <taxon>Metamycoplasmataceae</taxon>
        <taxon>Mesomycoplasma</taxon>
    </lineage>
</organism>
<dbReference type="EC" id="6.1.1.21" evidence="1"/>
<dbReference type="EMBL" id="AE017308">
    <property type="protein sequence ID" value="AAT27759.1"/>
    <property type="molecule type" value="Genomic_DNA"/>
</dbReference>
<dbReference type="SMR" id="Q6KI17"/>
<dbReference type="STRING" id="267748.MMOB2730"/>
<dbReference type="KEGG" id="mmo:MMOB2730"/>
<dbReference type="eggNOG" id="COG0124">
    <property type="taxonomic scope" value="Bacteria"/>
</dbReference>
<dbReference type="HOGENOM" id="CLU_025113_1_0_14"/>
<dbReference type="OrthoDB" id="9800814at2"/>
<dbReference type="Proteomes" id="UP000009072">
    <property type="component" value="Chromosome"/>
</dbReference>
<dbReference type="GO" id="GO:0005737">
    <property type="term" value="C:cytoplasm"/>
    <property type="evidence" value="ECO:0007669"/>
    <property type="project" value="UniProtKB-SubCell"/>
</dbReference>
<dbReference type="GO" id="GO:0005524">
    <property type="term" value="F:ATP binding"/>
    <property type="evidence" value="ECO:0007669"/>
    <property type="project" value="UniProtKB-UniRule"/>
</dbReference>
<dbReference type="GO" id="GO:0004821">
    <property type="term" value="F:histidine-tRNA ligase activity"/>
    <property type="evidence" value="ECO:0007669"/>
    <property type="project" value="UniProtKB-UniRule"/>
</dbReference>
<dbReference type="GO" id="GO:0006427">
    <property type="term" value="P:histidyl-tRNA aminoacylation"/>
    <property type="evidence" value="ECO:0007669"/>
    <property type="project" value="UniProtKB-UniRule"/>
</dbReference>
<dbReference type="CDD" id="cd00773">
    <property type="entry name" value="HisRS-like_core"/>
    <property type="match status" value="1"/>
</dbReference>
<dbReference type="Gene3D" id="3.30.930.10">
    <property type="entry name" value="Bira Bifunctional Protein, Domain 2"/>
    <property type="match status" value="1"/>
</dbReference>
<dbReference type="HAMAP" id="MF_00127">
    <property type="entry name" value="His_tRNA_synth"/>
    <property type="match status" value="1"/>
</dbReference>
<dbReference type="InterPro" id="IPR006195">
    <property type="entry name" value="aa-tRNA-synth_II"/>
</dbReference>
<dbReference type="InterPro" id="IPR045864">
    <property type="entry name" value="aa-tRNA-synth_II/BPL/LPL"/>
</dbReference>
<dbReference type="InterPro" id="IPR015807">
    <property type="entry name" value="His-tRNA-ligase"/>
</dbReference>
<dbReference type="InterPro" id="IPR041715">
    <property type="entry name" value="HisRS-like_core"/>
</dbReference>
<dbReference type="InterPro" id="IPR004516">
    <property type="entry name" value="HisRS/HisZ"/>
</dbReference>
<dbReference type="NCBIfam" id="TIGR00442">
    <property type="entry name" value="hisS"/>
    <property type="match status" value="1"/>
</dbReference>
<dbReference type="PANTHER" id="PTHR43707:SF1">
    <property type="entry name" value="HISTIDINE--TRNA LIGASE, MITOCHONDRIAL-RELATED"/>
    <property type="match status" value="1"/>
</dbReference>
<dbReference type="PANTHER" id="PTHR43707">
    <property type="entry name" value="HISTIDYL-TRNA SYNTHETASE"/>
    <property type="match status" value="1"/>
</dbReference>
<dbReference type="Pfam" id="PF13393">
    <property type="entry name" value="tRNA-synt_His"/>
    <property type="match status" value="1"/>
</dbReference>
<dbReference type="PIRSF" id="PIRSF001549">
    <property type="entry name" value="His-tRNA_synth"/>
    <property type="match status" value="1"/>
</dbReference>
<dbReference type="SUPFAM" id="SSF55681">
    <property type="entry name" value="Class II aaRS and biotin synthetases"/>
    <property type="match status" value="1"/>
</dbReference>
<dbReference type="PROSITE" id="PS50862">
    <property type="entry name" value="AA_TRNA_LIGASE_II"/>
    <property type="match status" value="1"/>
</dbReference>